<comment type="function">
    <text evidence="1">May be implicated in the gamete interaction during fertilization.</text>
</comment>
<comment type="subcellular location">
    <subcellularLocation>
        <location evidence="1">Secreted</location>
    </subcellularLocation>
    <subcellularLocation>
        <location evidence="2">Cytoplasmic vesicle</location>
        <location evidence="2">Secretory vesicle</location>
        <location evidence="2">Acrosome</location>
    </subcellularLocation>
</comment>
<comment type="similarity">
    <text evidence="4">Belongs to the zona pellucida-binding protein Sp38 family.</text>
</comment>
<reference key="1">
    <citation type="submission" date="2003-03" db="EMBL/GenBank/DDBJ databases">
        <title>Characterization of zona pellucida binding protein 2 (ZPBP2), a paralog of ZPBP1.</title>
        <authorList>
            <person name="Lin Y.-N."/>
            <person name="Yan W."/>
            <person name="Burns K."/>
            <person name="Matzuk M.M."/>
        </authorList>
    </citation>
    <scope>NUCLEOTIDE SEQUENCE [MRNA]</scope>
    <source>
        <tissue>Testis</tissue>
    </source>
</reference>
<gene>
    <name type="primary">ZPBP2</name>
</gene>
<name>ZPBP2_CHICK</name>
<dbReference type="EMBL" id="AY575015">
    <property type="protein sequence ID" value="AAS68636.1"/>
    <property type="molecule type" value="mRNA"/>
</dbReference>
<dbReference type="RefSeq" id="NP_996870.3">
    <property type="nucleotide sequence ID" value="NM_206987.3"/>
</dbReference>
<dbReference type="FunCoup" id="Q6PVW7">
    <property type="interactions" value="4"/>
</dbReference>
<dbReference type="STRING" id="9031.ENSGALP00000021931"/>
<dbReference type="GlyCosmos" id="Q6PVW7">
    <property type="glycosylation" value="2 sites, No reported glycans"/>
</dbReference>
<dbReference type="GlyGen" id="Q6PVW7">
    <property type="glycosylation" value="2 sites"/>
</dbReference>
<dbReference type="PaxDb" id="9031-ENSGALP00000021931"/>
<dbReference type="Ensembl" id="ENSGALT00010060002.1">
    <property type="protein sequence ID" value="ENSGALP00010036762.1"/>
    <property type="gene ID" value="ENSGALG00010024591.1"/>
</dbReference>
<dbReference type="GeneID" id="404532"/>
<dbReference type="KEGG" id="gga:404532"/>
<dbReference type="CTD" id="124626"/>
<dbReference type="VEuPathDB" id="HostDB:geneid_404532"/>
<dbReference type="eggNOG" id="ENOG502R75S">
    <property type="taxonomic scope" value="Eukaryota"/>
</dbReference>
<dbReference type="GeneTree" id="ENSGT00520000055647"/>
<dbReference type="InParanoid" id="Q6PVW7"/>
<dbReference type="OMA" id="KSCVGKY"/>
<dbReference type="OrthoDB" id="9403351at2759"/>
<dbReference type="PhylomeDB" id="Q6PVW7"/>
<dbReference type="PRO" id="PR:Q6PVW7"/>
<dbReference type="Proteomes" id="UP000000539">
    <property type="component" value="Chromosome 27"/>
</dbReference>
<dbReference type="GO" id="GO:0001669">
    <property type="term" value="C:acrosomal vesicle"/>
    <property type="evidence" value="ECO:0000318"/>
    <property type="project" value="GO_Central"/>
</dbReference>
<dbReference type="GO" id="GO:0044297">
    <property type="term" value="C:cell body"/>
    <property type="evidence" value="ECO:0007669"/>
    <property type="project" value="Ensembl"/>
</dbReference>
<dbReference type="GO" id="GO:0005576">
    <property type="term" value="C:extracellular region"/>
    <property type="evidence" value="ECO:0007669"/>
    <property type="project" value="UniProtKB-SubCell"/>
</dbReference>
<dbReference type="GO" id="GO:0016020">
    <property type="term" value="C:membrane"/>
    <property type="evidence" value="ECO:0007669"/>
    <property type="project" value="GOC"/>
</dbReference>
<dbReference type="GO" id="GO:0002199">
    <property type="term" value="C:zona pellucida receptor complex"/>
    <property type="evidence" value="ECO:0000318"/>
    <property type="project" value="GO_Central"/>
</dbReference>
<dbReference type="GO" id="GO:0001675">
    <property type="term" value="P:acrosome assembly"/>
    <property type="evidence" value="ECO:0000318"/>
    <property type="project" value="GO_Central"/>
</dbReference>
<dbReference type="GO" id="GO:0007339">
    <property type="term" value="P:binding of sperm to zona pellucida"/>
    <property type="evidence" value="ECO:0000318"/>
    <property type="project" value="GO_Central"/>
</dbReference>
<dbReference type="GO" id="GO:0032922">
    <property type="term" value="P:circadian regulation of gene expression"/>
    <property type="evidence" value="ECO:0007669"/>
    <property type="project" value="Ensembl"/>
</dbReference>
<dbReference type="GO" id="GO:0046466">
    <property type="term" value="P:membrane lipid catabolic process"/>
    <property type="evidence" value="ECO:0007669"/>
    <property type="project" value="Ensembl"/>
</dbReference>
<dbReference type="GO" id="GO:0002638">
    <property type="term" value="P:negative regulation of immunoglobulin production"/>
    <property type="evidence" value="ECO:0007669"/>
    <property type="project" value="Ensembl"/>
</dbReference>
<dbReference type="GO" id="GO:0006665">
    <property type="term" value="P:sphingolipid metabolic process"/>
    <property type="evidence" value="ECO:0007669"/>
    <property type="project" value="Ensembl"/>
</dbReference>
<dbReference type="InterPro" id="IPR007110">
    <property type="entry name" value="Ig-like_dom"/>
</dbReference>
<dbReference type="InterPro" id="IPR036179">
    <property type="entry name" value="Ig-like_dom_sf"/>
</dbReference>
<dbReference type="InterPro" id="IPR010857">
    <property type="entry name" value="Sp38-bd"/>
</dbReference>
<dbReference type="InterPro" id="IPR048805">
    <property type="entry name" value="ZPBP1/2_C"/>
</dbReference>
<dbReference type="InterPro" id="IPR048806">
    <property type="entry name" value="ZPBP1/2_N"/>
</dbReference>
<dbReference type="PANTHER" id="PTHR15443">
    <property type="entry name" value="ZONA PELLUCIDA BINDING PROTEIN SP38"/>
    <property type="match status" value="1"/>
</dbReference>
<dbReference type="PANTHER" id="PTHR15443:SF4">
    <property type="entry name" value="ZONA PELLUCIDA-BINDING PROTEIN 2"/>
    <property type="match status" value="1"/>
</dbReference>
<dbReference type="Pfam" id="PF20626">
    <property type="entry name" value="EGF_Sp38_C"/>
    <property type="match status" value="1"/>
</dbReference>
<dbReference type="Pfam" id="PF07354">
    <property type="entry name" value="Sp38"/>
    <property type="match status" value="1"/>
</dbReference>
<dbReference type="SUPFAM" id="SSF48726">
    <property type="entry name" value="Immunoglobulin"/>
    <property type="match status" value="1"/>
</dbReference>
<feature type="signal peptide" evidence="3">
    <location>
        <begin position="1"/>
        <end position="28"/>
    </location>
</feature>
<feature type="chain" id="PRO_0000041604" description="Zona pellucida-binding protein 2">
    <location>
        <begin position="29"/>
        <end position="352"/>
    </location>
</feature>
<feature type="glycosylation site" description="N-linked (GlcNAc...) asparagine" evidence="3">
    <location>
        <position position="110"/>
    </location>
</feature>
<feature type="glycosylation site" description="N-linked (GlcNAc...) asparagine" evidence="3">
    <location>
        <position position="309"/>
    </location>
</feature>
<proteinExistence type="evidence at transcript level"/>
<evidence type="ECO:0000250" key="1"/>
<evidence type="ECO:0000250" key="2">
    <source>
        <dbReference type="UniProtKB" id="Q6X786"/>
    </source>
</evidence>
<evidence type="ECO:0000255" key="3"/>
<evidence type="ECO:0000305" key="4"/>
<organism>
    <name type="scientific">Gallus gallus</name>
    <name type="common">Chicken</name>
    <dbReference type="NCBI Taxonomy" id="9031"/>
    <lineage>
        <taxon>Eukaryota</taxon>
        <taxon>Metazoa</taxon>
        <taxon>Chordata</taxon>
        <taxon>Craniata</taxon>
        <taxon>Vertebrata</taxon>
        <taxon>Euteleostomi</taxon>
        <taxon>Archelosauria</taxon>
        <taxon>Archosauria</taxon>
        <taxon>Dinosauria</taxon>
        <taxon>Saurischia</taxon>
        <taxon>Theropoda</taxon>
        <taxon>Coelurosauria</taxon>
        <taxon>Aves</taxon>
        <taxon>Neognathae</taxon>
        <taxon>Galloanserae</taxon>
        <taxon>Galliformes</taxon>
        <taxon>Phasianidae</taxon>
        <taxon>Phasianinae</taxon>
        <taxon>Gallus</taxon>
    </lineage>
</organism>
<keyword id="KW-0968">Cytoplasmic vesicle</keyword>
<keyword id="KW-0325">Glycoprotein</keyword>
<keyword id="KW-1185">Reference proteome</keyword>
<keyword id="KW-0964">Secreted</keyword>
<keyword id="KW-0732">Signal</keyword>
<protein>
    <recommendedName>
        <fullName>Zona pellucida-binding protein 2</fullName>
    </recommendedName>
</protein>
<sequence>MAGGGGRPCSPQRALLGMVAIMAVVAEARWGAPGRARAAPEEDQISVGFFRKNVIYGNVRRAENVYVKMFTNSPSLVCMDLSLSQEEIIDPKYSWTGPDGRNLEGRGYANLTGSGELMLVGFQESMSGAYTCTLSHRIIETSAQEEVDVRDTYRFMVYAYREANHVYQVSVRFTAKGCELAANARFVEELKKIMESLISDLTCGVKGPSYRCHSLEAPHRGSPSELFITFQVNPFAPGWEDLCSRLPQDCEDTTNRRAQEATERIGEFFRKQTYALKHQFQTVPTIHYVEGSFSVTPIDSCRPGFGRNNITHRSCAGCCVVCSPGTYSPDSAGSCRVCAGRRTAGYGAKSCP</sequence>
<accession>Q6PVW7</accession>